<feature type="chain" id="PRO_1000114697" description="Potassium-transporting ATPase potassium-binding subunit">
    <location>
        <begin position="1"/>
        <end position="571"/>
    </location>
</feature>
<feature type="transmembrane region" description="Helical" evidence="1">
    <location>
        <begin position="5"/>
        <end position="25"/>
    </location>
</feature>
<feature type="transmembrane region" description="Helical" evidence="1">
    <location>
        <begin position="60"/>
        <end position="80"/>
    </location>
</feature>
<feature type="transmembrane region" description="Helical" evidence="1">
    <location>
        <begin position="86"/>
        <end position="106"/>
    </location>
</feature>
<feature type="transmembrane region" description="Helical" evidence="1">
    <location>
        <begin position="131"/>
        <end position="151"/>
    </location>
</feature>
<feature type="transmembrane region" description="Helical" evidence="1">
    <location>
        <begin position="177"/>
        <end position="197"/>
    </location>
</feature>
<feature type="transmembrane region" description="Helical" evidence="1">
    <location>
        <begin position="247"/>
        <end position="267"/>
    </location>
</feature>
<feature type="transmembrane region" description="Helical" evidence="1">
    <location>
        <begin position="291"/>
        <end position="311"/>
    </location>
</feature>
<feature type="transmembrane region" description="Helical" evidence="1">
    <location>
        <begin position="334"/>
        <end position="354"/>
    </location>
</feature>
<feature type="transmembrane region" description="Helical" evidence="1">
    <location>
        <begin position="386"/>
        <end position="406"/>
    </location>
</feature>
<feature type="transmembrane region" description="Helical" evidence="1">
    <location>
        <begin position="425"/>
        <end position="445"/>
    </location>
</feature>
<feature type="transmembrane region" description="Helical" evidence="1">
    <location>
        <begin position="498"/>
        <end position="518"/>
    </location>
</feature>
<feature type="transmembrane region" description="Helical" evidence="1">
    <location>
        <begin position="547"/>
        <end position="567"/>
    </location>
</feature>
<evidence type="ECO:0000255" key="1">
    <source>
        <dbReference type="HAMAP-Rule" id="MF_00275"/>
    </source>
</evidence>
<dbReference type="EMBL" id="CP000431">
    <property type="protein sequence ID" value="ABG93056.1"/>
    <property type="molecule type" value="Genomic_DNA"/>
</dbReference>
<dbReference type="RefSeq" id="WP_011594316.1">
    <property type="nucleotide sequence ID" value="NC_008268.1"/>
</dbReference>
<dbReference type="SMR" id="Q0SHD0"/>
<dbReference type="KEGG" id="rha:RHA1_ro01232"/>
<dbReference type="PATRIC" id="fig|101510.16.peg.1256"/>
<dbReference type="eggNOG" id="COG2060">
    <property type="taxonomic scope" value="Bacteria"/>
</dbReference>
<dbReference type="HOGENOM" id="CLU_018614_3_0_11"/>
<dbReference type="OrthoDB" id="9763796at2"/>
<dbReference type="Proteomes" id="UP000008710">
    <property type="component" value="Chromosome"/>
</dbReference>
<dbReference type="GO" id="GO:0005886">
    <property type="term" value="C:plasma membrane"/>
    <property type="evidence" value="ECO:0007669"/>
    <property type="project" value="UniProtKB-SubCell"/>
</dbReference>
<dbReference type="GO" id="GO:0008556">
    <property type="term" value="F:P-type potassium transmembrane transporter activity"/>
    <property type="evidence" value="ECO:0007669"/>
    <property type="project" value="InterPro"/>
</dbReference>
<dbReference type="GO" id="GO:0030955">
    <property type="term" value="F:potassium ion binding"/>
    <property type="evidence" value="ECO:0007669"/>
    <property type="project" value="UniProtKB-UniRule"/>
</dbReference>
<dbReference type="HAMAP" id="MF_00275">
    <property type="entry name" value="KdpA"/>
    <property type="match status" value="1"/>
</dbReference>
<dbReference type="InterPro" id="IPR004623">
    <property type="entry name" value="KdpA"/>
</dbReference>
<dbReference type="NCBIfam" id="TIGR00680">
    <property type="entry name" value="kdpA"/>
    <property type="match status" value="1"/>
</dbReference>
<dbReference type="PANTHER" id="PTHR30607">
    <property type="entry name" value="POTASSIUM-TRANSPORTING ATPASE A CHAIN"/>
    <property type="match status" value="1"/>
</dbReference>
<dbReference type="PANTHER" id="PTHR30607:SF2">
    <property type="entry name" value="POTASSIUM-TRANSPORTING ATPASE POTASSIUM-BINDING SUBUNIT"/>
    <property type="match status" value="1"/>
</dbReference>
<dbReference type="Pfam" id="PF03814">
    <property type="entry name" value="KdpA"/>
    <property type="match status" value="1"/>
</dbReference>
<dbReference type="PIRSF" id="PIRSF001294">
    <property type="entry name" value="K_ATPaseA"/>
    <property type="match status" value="1"/>
</dbReference>
<gene>
    <name evidence="1" type="primary">kdpA</name>
    <name type="ordered locus">RHA1_ro01232</name>
</gene>
<protein>
    <recommendedName>
        <fullName evidence="1">Potassium-transporting ATPase potassium-binding subunit</fullName>
    </recommendedName>
    <alternativeName>
        <fullName evidence="1">ATP phosphohydrolase [potassium-transporting] A chain</fullName>
    </alternativeName>
    <alternativeName>
        <fullName evidence="1">Potassium-binding and translocating subunit A</fullName>
    </alternativeName>
    <alternativeName>
        <fullName evidence="1">Potassium-translocating ATPase A chain</fullName>
    </alternativeName>
</protein>
<comment type="function">
    <text evidence="1">Part of the high-affinity ATP-driven potassium transport (or Kdp) system, which catalyzes the hydrolysis of ATP coupled with the electrogenic transport of potassium into the cytoplasm. This subunit binds the extracellular potassium ions and delivers the ions to the membrane domain of KdpB through an intramembrane tunnel.</text>
</comment>
<comment type="subunit">
    <text evidence="1">The system is composed of three essential subunits: KdpA, KdpB and KdpC.</text>
</comment>
<comment type="subcellular location">
    <subcellularLocation>
        <location evidence="1">Cell membrane</location>
        <topology evidence="1">Multi-pass membrane protein</topology>
    </subcellularLocation>
</comment>
<comment type="similarity">
    <text evidence="1">Belongs to the KdpA family.</text>
</comment>
<keyword id="KW-1003">Cell membrane</keyword>
<keyword id="KW-0406">Ion transport</keyword>
<keyword id="KW-0472">Membrane</keyword>
<keyword id="KW-0630">Potassium</keyword>
<keyword id="KW-0633">Potassium transport</keyword>
<keyword id="KW-0812">Transmembrane</keyword>
<keyword id="KW-1133">Transmembrane helix</keyword>
<keyword id="KW-0813">Transport</keyword>
<sequence length="571" mass="58767">MTPALAAGLQVAFVLAVLAVAYVPVGDYMARVYESRRHLRFESVLYRLCRINPHTEQTWYGYAGSVLGFSTASVLFLYALQRIQGVLPLSGDLSGVSPAVAFNTAVSFVTNTNWQSYAPETTMSNLTQPVGLAVQNFVSAAVGMAVAVALIRGFVRVSRGGEIGNFWVDLTRGSLRILLPFSFVIALILLSQGVIQSFHPGFASTGLDGNSVTNALAPVASQEAIKELGTNGGGILAANSAHPFENPTPVSNIVEILAILLIPVSLTRTFGTMVGDPHDRASEVSGHRQGLTLLAVMGILWGSLLAVTLAAESGRRGVAATAAGAMMEGKEVRFGIPGTALFAVSTTGTSTGAVNSAHDSLSPLGGGAVLLNMLLGEIAPGGVGTGLYGILVLALIAVFVGGLLVGRTPEYLGKKLRQREITLAALSVLVMPALVLIGTGITVILSSTTGYQGNSGDPGSPGSIHGFSEVLYAFASASNNNGSAFGGLTVTSDWFQTALGLCMLFGRFLPIIFVLALAGSLASQKKTAAGAGTLPTAGPMFTGLLTGTVVLVAALTFFPALALGPIAEALQ</sequence>
<accession>Q0SHD0</accession>
<organism>
    <name type="scientific">Rhodococcus jostii (strain RHA1)</name>
    <dbReference type="NCBI Taxonomy" id="101510"/>
    <lineage>
        <taxon>Bacteria</taxon>
        <taxon>Bacillati</taxon>
        <taxon>Actinomycetota</taxon>
        <taxon>Actinomycetes</taxon>
        <taxon>Mycobacteriales</taxon>
        <taxon>Nocardiaceae</taxon>
        <taxon>Rhodococcus</taxon>
    </lineage>
</organism>
<proteinExistence type="inferred from homology"/>
<name>KDPA_RHOJR</name>
<reference key="1">
    <citation type="journal article" date="2006" name="Proc. Natl. Acad. Sci. U.S.A.">
        <title>The complete genome of Rhodococcus sp. RHA1 provides insights into a catabolic powerhouse.</title>
        <authorList>
            <person name="McLeod M.P."/>
            <person name="Warren R.L."/>
            <person name="Hsiao W.W.L."/>
            <person name="Araki N."/>
            <person name="Myhre M."/>
            <person name="Fernandes C."/>
            <person name="Miyazawa D."/>
            <person name="Wong W."/>
            <person name="Lillquist A.L."/>
            <person name="Wang D."/>
            <person name="Dosanjh M."/>
            <person name="Hara H."/>
            <person name="Petrescu A."/>
            <person name="Morin R.D."/>
            <person name="Yang G."/>
            <person name="Stott J.M."/>
            <person name="Schein J.E."/>
            <person name="Shin H."/>
            <person name="Smailus D."/>
            <person name="Siddiqui A.S."/>
            <person name="Marra M.A."/>
            <person name="Jones S.J.M."/>
            <person name="Holt R."/>
            <person name="Brinkman F.S.L."/>
            <person name="Miyauchi K."/>
            <person name="Fukuda M."/>
            <person name="Davies J.E."/>
            <person name="Mohn W.W."/>
            <person name="Eltis L.D."/>
        </authorList>
    </citation>
    <scope>NUCLEOTIDE SEQUENCE [LARGE SCALE GENOMIC DNA]</scope>
    <source>
        <strain>RHA1</strain>
    </source>
</reference>